<keyword id="KW-0145">Chemotaxis</keyword>
<keyword id="KW-0963">Cytoplasm</keyword>
<keyword id="KW-0378">Hydrolase</keyword>
<keyword id="KW-0597">Phosphoprotein</keyword>
<keyword id="KW-1185">Reference proteome</keyword>
<name>CHEB_IDILO</name>
<dbReference type="EC" id="3.1.1.61" evidence="1"/>
<dbReference type="EC" id="3.5.1.44" evidence="1"/>
<dbReference type="EMBL" id="AE017340">
    <property type="protein sequence ID" value="AAV81953.1"/>
    <property type="molecule type" value="Genomic_DNA"/>
</dbReference>
<dbReference type="RefSeq" id="WP_011234364.1">
    <property type="nucleotide sequence ID" value="NC_006512.1"/>
</dbReference>
<dbReference type="SMR" id="Q5QZQ3"/>
<dbReference type="STRING" id="283942.IL1113"/>
<dbReference type="GeneID" id="41336281"/>
<dbReference type="KEGG" id="ilo:IL1113"/>
<dbReference type="eggNOG" id="COG2201">
    <property type="taxonomic scope" value="Bacteria"/>
</dbReference>
<dbReference type="HOGENOM" id="CLU_000445_51_0_6"/>
<dbReference type="OrthoDB" id="9793421at2"/>
<dbReference type="Proteomes" id="UP000001171">
    <property type="component" value="Chromosome"/>
</dbReference>
<dbReference type="GO" id="GO:0005737">
    <property type="term" value="C:cytoplasm"/>
    <property type="evidence" value="ECO:0007669"/>
    <property type="project" value="UniProtKB-SubCell"/>
</dbReference>
<dbReference type="GO" id="GO:0000156">
    <property type="term" value="F:phosphorelay response regulator activity"/>
    <property type="evidence" value="ECO:0007669"/>
    <property type="project" value="InterPro"/>
</dbReference>
<dbReference type="GO" id="GO:0008984">
    <property type="term" value="F:protein-glutamate methylesterase activity"/>
    <property type="evidence" value="ECO:0007669"/>
    <property type="project" value="UniProtKB-UniRule"/>
</dbReference>
<dbReference type="GO" id="GO:0050568">
    <property type="term" value="F:protein-glutamine glutaminase activity"/>
    <property type="evidence" value="ECO:0007669"/>
    <property type="project" value="UniProtKB-UniRule"/>
</dbReference>
<dbReference type="GO" id="GO:0006935">
    <property type="term" value="P:chemotaxis"/>
    <property type="evidence" value="ECO:0007669"/>
    <property type="project" value="UniProtKB-UniRule"/>
</dbReference>
<dbReference type="CDD" id="cd16432">
    <property type="entry name" value="CheB_Rec"/>
    <property type="match status" value="1"/>
</dbReference>
<dbReference type="CDD" id="cd17541">
    <property type="entry name" value="REC_CheB-like"/>
    <property type="match status" value="1"/>
</dbReference>
<dbReference type="FunFam" id="3.40.50.2300:FF:000077">
    <property type="entry name" value="Chemotaxis response regulator"/>
    <property type="match status" value="1"/>
</dbReference>
<dbReference type="Gene3D" id="3.40.50.2300">
    <property type="match status" value="1"/>
</dbReference>
<dbReference type="Gene3D" id="3.40.50.180">
    <property type="entry name" value="Methylesterase CheB, C-terminal domain"/>
    <property type="match status" value="1"/>
</dbReference>
<dbReference type="HAMAP" id="MF_00099">
    <property type="entry name" value="CheB_chemtxs"/>
    <property type="match status" value="1"/>
</dbReference>
<dbReference type="InterPro" id="IPR008248">
    <property type="entry name" value="CheB-like"/>
</dbReference>
<dbReference type="InterPro" id="IPR035909">
    <property type="entry name" value="CheB_C"/>
</dbReference>
<dbReference type="InterPro" id="IPR011006">
    <property type="entry name" value="CheY-like_superfamily"/>
</dbReference>
<dbReference type="InterPro" id="IPR000673">
    <property type="entry name" value="Sig_transdc_resp-reg_Me-estase"/>
</dbReference>
<dbReference type="InterPro" id="IPR001789">
    <property type="entry name" value="Sig_transdc_resp-reg_receiver"/>
</dbReference>
<dbReference type="NCBIfam" id="NF001965">
    <property type="entry name" value="PRK00742.1"/>
    <property type="match status" value="1"/>
</dbReference>
<dbReference type="PANTHER" id="PTHR42872">
    <property type="entry name" value="PROTEIN-GLUTAMATE METHYLESTERASE/PROTEIN-GLUTAMINE GLUTAMINASE"/>
    <property type="match status" value="1"/>
</dbReference>
<dbReference type="PANTHER" id="PTHR42872:SF3">
    <property type="entry name" value="PROTEIN-GLUTAMATE METHYLESTERASE_PROTEIN-GLUTAMINE GLUTAMINASE 1"/>
    <property type="match status" value="1"/>
</dbReference>
<dbReference type="Pfam" id="PF01339">
    <property type="entry name" value="CheB_methylest"/>
    <property type="match status" value="1"/>
</dbReference>
<dbReference type="Pfam" id="PF00072">
    <property type="entry name" value="Response_reg"/>
    <property type="match status" value="1"/>
</dbReference>
<dbReference type="PIRSF" id="PIRSF000876">
    <property type="entry name" value="RR_chemtxs_CheB"/>
    <property type="match status" value="1"/>
</dbReference>
<dbReference type="SMART" id="SM00448">
    <property type="entry name" value="REC"/>
    <property type="match status" value="1"/>
</dbReference>
<dbReference type="SUPFAM" id="SSF52172">
    <property type="entry name" value="CheY-like"/>
    <property type="match status" value="1"/>
</dbReference>
<dbReference type="SUPFAM" id="SSF52738">
    <property type="entry name" value="Methylesterase CheB, C-terminal domain"/>
    <property type="match status" value="1"/>
</dbReference>
<dbReference type="PROSITE" id="PS50122">
    <property type="entry name" value="CHEB"/>
    <property type="match status" value="1"/>
</dbReference>
<dbReference type="PROSITE" id="PS50110">
    <property type="entry name" value="RESPONSE_REGULATORY"/>
    <property type="match status" value="1"/>
</dbReference>
<comment type="function">
    <text evidence="1">Involved in chemotaxis. Part of a chemotaxis signal transduction system that modulates chemotaxis in response to various stimuli. Catalyzes the demethylation of specific methylglutamate residues introduced into the chemoreceptors (methyl-accepting chemotaxis proteins or MCP) by CheR. Also mediates the irreversible deamidation of specific glutamine residues to glutamic acid.</text>
</comment>
<comment type="catalytic activity">
    <reaction evidence="1">
        <text>[protein]-L-glutamate 5-O-methyl ester + H2O = L-glutamyl-[protein] + methanol + H(+)</text>
        <dbReference type="Rhea" id="RHEA:23236"/>
        <dbReference type="Rhea" id="RHEA-COMP:10208"/>
        <dbReference type="Rhea" id="RHEA-COMP:10311"/>
        <dbReference type="ChEBI" id="CHEBI:15377"/>
        <dbReference type="ChEBI" id="CHEBI:15378"/>
        <dbReference type="ChEBI" id="CHEBI:17790"/>
        <dbReference type="ChEBI" id="CHEBI:29973"/>
        <dbReference type="ChEBI" id="CHEBI:82795"/>
        <dbReference type="EC" id="3.1.1.61"/>
    </reaction>
</comment>
<comment type="catalytic activity">
    <reaction evidence="1">
        <text>L-glutaminyl-[protein] + H2O = L-glutamyl-[protein] + NH4(+)</text>
        <dbReference type="Rhea" id="RHEA:16441"/>
        <dbReference type="Rhea" id="RHEA-COMP:10207"/>
        <dbReference type="Rhea" id="RHEA-COMP:10208"/>
        <dbReference type="ChEBI" id="CHEBI:15377"/>
        <dbReference type="ChEBI" id="CHEBI:28938"/>
        <dbReference type="ChEBI" id="CHEBI:29973"/>
        <dbReference type="ChEBI" id="CHEBI:30011"/>
        <dbReference type="EC" id="3.5.1.44"/>
    </reaction>
</comment>
<comment type="subcellular location">
    <subcellularLocation>
        <location evidence="1">Cytoplasm</location>
    </subcellularLocation>
</comment>
<comment type="domain">
    <text evidence="1">Contains a C-terminal catalytic domain, and an N-terminal region which modulates catalytic activity.</text>
</comment>
<comment type="PTM">
    <text evidence="1">Phosphorylated by CheA. Phosphorylation of the N-terminal regulatory domain activates the methylesterase activity.</text>
</comment>
<comment type="similarity">
    <text evidence="1">Belongs to the CheB family.</text>
</comment>
<feature type="chain" id="PRO_0000225463" description="Protein-glutamate methylesterase/protein-glutamine glutaminase">
    <location>
        <begin position="1"/>
        <end position="386"/>
    </location>
</feature>
<feature type="domain" description="Response regulatory" evidence="1">
    <location>
        <begin position="4"/>
        <end position="121"/>
    </location>
</feature>
<feature type="domain" description="CheB-type methylesterase" evidence="1">
    <location>
        <begin position="190"/>
        <end position="384"/>
    </location>
</feature>
<feature type="region of interest" description="Disordered" evidence="2">
    <location>
        <begin position="133"/>
        <end position="161"/>
    </location>
</feature>
<feature type="active site" evidence="1">
    <location>
        <position position="202"/>
    </location>
</feature>
<feature type="active site" evidence="1">
    <location>
        <position position="229"/>
    </location>
</feature>
<feature type="active site" evidence="1">
    <location>
        <position position="326"/>
    </location>
</feature>
<feature type="modified residue" description="4-aspartylphosphate" evidence="1">
    <location>
        <position position="55"/>
    </location>
</feature>
<sequence length="386" mass="41459">MTVKVLVVDDSAFFRRRVTEILEDNTNIKVIGSANNGEEAVEQSRTLKPDVITMDIEMPVMNGIDAVKAIMSSNPCPILMFSSLTHEGATATLNALEAGAADFLPKKFEDIARNRDEAVKTLQDRVIAIARQPVSRTSARASTPPPVAKQPERSSEPTTALDRIRQRNNELQSQRESDARTATSAGALTINRAYQLLAIGTSTGGPVALQKILTQLPGNFPYPIVMVQHMPAAFTKAFSQRLDGLCQVHVKEAEDGDVLKAGTAYLAPGGKQMMVEGRPGSARLRIKDDTSGRITYKPSVDLTFASLSKTYMGKVLGVILTGMGADGRDGSRMLKDQGATIWAQDQASCVVYGMPQAVAQAGISTRSISLEGMAKAIMKEVGYSGL</sequence>
<accession>Q5QZQ3</accession>
<gene>
    <name evidence="1" type="primary">cheB</name>
    <name type="ordered locus">IL1113</name>
</gene>
<organism>
    <name type="scientific">Idiomarina loihiensis (strain ATCC BAA-735 / DSM 15497 / L2-TR)</name>
    <dbReference type="NCBI Taxonomy" id="283942"/>
    <lineage>
        <taxon>Bacteria</taxon>
        <taxon>Pseudomonadati</taxon>
        <taxon>Pseudomonadota</taxon>
        <taxon>Gammaproteobacteria</taxon>
        <taxon>Alteromonadales</taxon>
        <taxon>Idiomarinaceae</taxon>
        <taxon>Idiomarina</taxon>
    </lineage>
</organism>
<proteinExistence type="inferred from homology"/>
<reference key="1">
    <citation type="journal article" date="2004" name="Proc. Natl. Acad. Sci. U.S.A.">
        <title>Genome sequence of the deep-sea gamma-proteobacterium Idiomarina loihiensis reveals amino acid fermentation as a source of carbon and energy.</title>
        <authorList>
            <person name="Hou S."/>
            <person name="Saw J.H."/>
            <person name="Lee K.S."/>
            <person name="Freitas T.A."/>
            <person name="Belisle C."/>
            <person name="Kawarabayasi Y."/>
            <person name="Donachie S.P."/>
            <person name="Pikina A."/>
            <person name="Galperin M.Y."/>
            <person name="Koonin E.V."/>
            <person name="Makarova K.S."/>
            <person name="Omelchenko M.V."/>
            <person name="Sorokin A."/>
            <person name="Wolf Y.I."/>
            <person name="Li Q.X."/>
            <person name="Keum Y.S."/>
            <person name="Campbell S."/>
            <person name="Denery J."/>
            <person name="Aizawa S."/>
            <person name="Shibata S."/>
            <person name="Malahoff A."/>
            <person name="Alam M."/>
        </authorList>
    </citation>
    <scope>NUCLEOTIDE SEQUENCE [LARGE SCALE GENOMIC DNA]</scope>
    <source>
        <strain>ATCC BAA-735 / DSM 15497 / L2-TR</strain>
    </source>
</reference>
<protein>
    <recommendedName>
        <fullName evidence="1">Protein-glutamate methylesterase/protein-glutamine glutaminase</fullName>
        <ecNumber evidence="1">3.1.1.61</ecNumber>
        <ecNumber evidence="1">3.5.1.44</ecNumber>
    </recommendedName>
</protein>
<evidence type="ECO:0000255" key="1">
    <source>
        <dbReference type="HAMAP-Rule" id="MF_00099"/>
    </source>
</evidence>
<evidence type="ECO:0000256" key="2">
    <source>
        <dbReference type="SAM" id="MobiDB-lite"/>
    </source>
</evidence>